<sequence>MTKVGLRIDVDTLRGTREGVPRLLATLHRHGVQASFFFSVGPDNMGRHLWRLIKPRFLWKMLRSNAASLYGWDILLAGTAWPGKNIGNANAGIIRETATYHETGLHAWDHHAWQTHSGHWSIRQLEEDIARGITALEAIIGKPVTCSAAAGWRADGRVVRAKESFNLRYNSDCRGTTLFRPLLMPGQTGTPQIPVTLPTWDEVIGPAVQAQSFNTWIISRMLQDKGTPVYTIHAEVEGIVHQPLFEDLLVRARDAGITFCPLGELLPASPESLPLGQIVRGHIPGREGWLGCQQAASAS</sequence>
<evidence type="ECO:0000255" key="1">
    <source>
        <dbReference type="HAMAP-Rule" id="MF_01870"/>
    </source>
</evidence>
<evidence type="ECO:0000269" key="2">
    <source>
    </source>
</evidence>
<evidence type="ECO:0000305" key="3">
    <source>
    </source>
</evidence>
<evidence type="ECO:0007829" key="4">
    <source>
        <dbReference type="PDB" id="8T0J"/>
    </source>
</evidence>
<protein>
    <recommendedName>
        <fullName evidence="1">Probable 4-deoxy-4-formamido-L-arabinose-phosphoundecaprenol deformylase ArnD</fullName>
        <ecNumber evidence="1">3.5.1.n3</ecNumber>
    </recommendedName>
</protein>
<organism>
    <name type="scientific">Salmonella typhimurium (strain LT2 / SGSC1412 / ATCC 700720)</name>
    <dbReference type="NCBI Taxonomy" id="99287"/>
    <lineage>
        <taxon>Bacteria</taxon>
        <taxon>Pseudomonadati</taxon>
        <taxon>Pseudomonadota</taxon>
        <taxon>Gammaproteobacteria</taxon>
        <taxon>Enterobacterales</taxon>
        <taxon>Enterobacteriaceae</taxon>
        <taxon>Salmonella</taxon>
    </lineage>
</organism>
<proteinExistence type="evidence at protein level"/>
<comment type="function">
    <text evidence="3">Catalyzes the deformylation of 4-deoxy-4-formamido-L-arabinose-phosphoundecaprenol to 4-amino-4-deoxy-L-arabinose-phosphoundecaprenol. The modified arabinose is attached to lipid A and is required for resistance to polymyxin and cationic antimicrobial peptides (Probable).</text>
</comment>
<comment type="catalytic activity">
    <reaction evidence="1">
        <text>4-deoxy-4-formamido-alpha-L-arabinopyranosyl di-trans,octa-cis-undecaprenyl phosphate + H2O = 4-amino-4-deoxy-alpha-L-arabinopyranosyl di-trans,octa-cis-undecaprenyl phosphate + formate</text>
        <dbReference type="Rhea" id="RHEA:27734"/>
        <dbReference type="ChEBI" id="CHEBI:15377"/>
        <dbReference type="ChEBI" id="CHEBI:15740"/>
        <dbReference type="ChEBI" id="CHEBI:58909"/>
        <dbReference type="ChEBI" id="CHEBI:60463"/>
        <dbReference type="EC" id="3.5.1.n3"/>
    </reaction>
</comment>
<comment type="pathway">
    <text evidence="1">Glycolipid biosynthesis; 4-amino-4-deoxy-alpha-L-arabinose undecaprenyl phosphate biosynthesis; 4-amino-4-deoxy-alpha-L-arabinose undecaprenyl phosphate from UDP-4-deoxy-4-formamido-beta-L-arabinose and undecaprenyl phosphate: step 2/2.</text>
</comment>
<comment type="pathway">
    <text evidence="1">Bacterial outer membrane biogenesis; lipopolysaccharide biosynthesis.</text>
</comment>
<comment type="induction">
    <text evidence="2">Induced by BasR.</text>
</comment>
<comment type="similarity">
    <text evidence="1">Belongs to the polysaccharide deacetylase family. ArnD deformylase subfamily.</text>
</comment>
<dbReference type="EC" id="3.5.1.n3" evidence="1"/>
<dbReference type="EMBL" id="AF036677">
    <property type="protein sequence ID" value="AAC04773.1"/>
    <property type="molecule type" value="Genomic_DNA"/>
</dbReference>
<dbReference type="EMBL" id="AE006468">
    <property type="protein sequence ID" value="AAL21201.1"/>
    <property type="molecule type" value="Genomic_DNA"/>
</dbReference>
<dbReference type="RefSeq" id="NP_461242.1">
    <property type="nucleotide sequence ID" value="NC_003197.2"/>
</dbReference>
<dbReference type="RefSeq" id="WP_000169761.1">
    <property type="nucleotide sequence ID" value="NC_003197.2"/>
</dbReference>
<dbReference type="PDB" id="8T0J">
    <property type="method" value="X-ray"/>
    <property type="resolution" value="2.59 A"/>
    <property type="chains" value="A=1-299"/>
</dbReference>
<dbReference type="PDBsum" id="8T0J"/>
<dbReference type="SMR" id="O52326"/>
<dbReference type="STRING" id="99287.STM2300"/>
<dbReference type="PaxDb" id="99287-STM2300"/>
<dbReference type="GeneID" id="1253822"/>
<dbReference type="KEGG" id="stm:STM2300"/>
<dbReference type="PATRIC" id="fig|99287.12.peg.2435"/>
<dbReference type="HOGENOM" id="CLU_084199_0_0_6"/>
<dbReference type="OMA" id="HHGWQAN"/>
<dbReference type="PhylomeDB" id="O52326"/>
<dbReference type="BioCyc" id="SENT99287:STM2300-MONOMER"/>
<dbReference type="UniPathway" id="UPA00030"/>
<dbReference type="UniPathway" id="UPA00036">
    <property type="reaction ID" value="UER00496"/>
</dbReference>
<dbReference type="Proteomes" id="UP000001014">
    <property type="component" value="Chromosome"/>
</dbReference>
<dbReference type="GO" id="GO:0016020">
    <property type="term" value="C:membrane"/>
    <property type="evidence" value="ECO:0007669"/>
    <property type="project" value="GOC"/>
</dbReference>
<dbReference type="GO" id="GO:0016811">
    <property type="term" value="F:hydrolase activity, acting on carbon-nitrogen (but not peptide) bonds, in linear amides"/>
    <property type="evidence" value="ECO:0007669"/>
    <property type="project" value="UniProtKB-UniRule"/>
</dbReference>
<dbReference type="GO" id="GO:0036108">
    <property type="term" value="P:4-amino-4-deoxy-alpha-L-arabinopyranosyl undecaprenyl phosphate biosynthetic process"/>
    <property type="evidence" value="ECO:0007669"/>
    <property type="project" value="UniProtKB-UniRule"/>
</dbReference>
<dbReference type="GO" id="GO:0009245">
    <property type="term" value="P:lipid A biosynthetic process"/>
    <property type="evidence" value="ECO:0007669"/>
    <property type="project" value="UniProtKB-UniRule"/>
</dbReference>
<dbReference type="GO" id="GO:0009103">
    <property type="term" value="P:lipopolysaccharide biosynthetic process"/>
    <property type="evidence" value="ECO:0007669"/>
    <property type="project" value="UniProtKB-UniRule"/>
</dbReference>
<dbReference type="GO" id="GO:0046677">
    <property type="term" value="P:response to antibiotic"/>
    <property type="evidence" value="ECO:0007669"/>
    <property type="project" value="UniProtKB-KW"/>
</dbReference>
<dbReference type="Gene3D" id="3.20.20.370">
    <property type="entry name" value="Glycoside hydrolase/deacetylase"/>
    <property type="match status" value="1"/>
</dbReference>
<dbReference type="HAMAP" id="MF_01870">
    <property type="entry name" value="ArnD"/>
    <property type="match status" value="1"/>
</dbReference>
<dbReference type="InterPro" id="IPR023557">
    <property type="entry name" value="ArnD"/>
</dbReference>
<dbReference type="InterPro" id="IPR011330">
    <property type="entry name" value="Glyco_hydro/deAcase_b/a-brl"/>
</dbReference>
<dbReference type="InterPro" id="IPR002509">
    <property type="entry name" value="NODB_dom"/>
</dbReference>
<dbReference type="InterPro" id="IPR050248">
    <property type="entry name" value="Polysacc_deacetylase_ArnD"/>
</dbReference>
<dbReference type="NCBIfam" id="NF011923">
    <property type="entry name" value="PRK15394.1"/>
    <property type="match status" value="1"/>
</dbReference>
<dbReference type="PANTHER" id="PTHR10587:SF137">
    <property type="entry name" value="4-DEOXY-4-FORMAMIDO-L-ARABINOSE-PHOSPHOUNDECAPRENOL DEFORMYLASE ARND-RELATED"/>
    <property type="match status" value="1"/>
</dbReference>
<dbReference type="PANTHER" id="PTHR10587">
    <property type="entry name" value="GLYCOSYL TRANSFERASE-RELATED"/>
    <property type="match status" value="1"/>
</dbReference>
<dbReference type="Pfam" id="PF01522">
    <property type="entry name" value="Polysacc_deac_1"/>
    <property type="match status" value="1"/>
</dbReference>
<dbReference type="SUPFAM" id="SSF88713">
    <property type="entry name" value="Glycoside hydrolase/deacetylase"/>
    <property type="match status" value="1"/>
</dbReference>
<dbReference type="PROSITE" id="PS51677">
    <property type="entry name" value="NODB"/>
    <property type="match status" value="1"/>
</dbReference>
<accession>O52326</accession>
<reference key="1">
    <citation type="journal article" date="1998" name="Mol. Microbiol.">
        <title>PmrA-PmrB-regulated genes necessary for 4-aminoarabinose lipid A modification and polymyxin resistance.</title>
        <authorList>
            <person name="Gunn J.S."/>
            <person name="Lim K.B."/>
            <person name="Krueger J."/>
            <person name="Kim K."/>
            <person name="Guo L."/>
            <person name="Hackett M."/>
            <person name="Miller S.I."/>
        </authorList>
    </citation>
    <scope>NUCLEOTIDE SEQUENCE [GENOMIC DNA]</scope>
    <source>
        <strain>ATCC 14028s / SGSG 2262</strain>
    </source>
</reference>
<reference key="2">
    <citation type="journal article" date="2001" name="Nature">
        <title>Complete genome sequence of Salmonella enterica serovar Typhimurium LT2.</title>
        <authorList>
            <person name="McClelland M."/>
            <person name="Sanderson K.E."/>
            <person name="Spieth J."/>
            <person name="Clifton S.W."/>
            <person name="Latreille P."/>
            <person name="Courtney L."/>
            <person name="Porwollik S."/>
            <person name="Ali J."/>
            <person name="Dante M."/>
            <person name="Du F."/>
            <person name="Hou S."/>
            <person name="Layman D."/>
            <person name="Leonard S."/>
            <person name="Nguyen C."/>
            <person name="Scott K."/>
            <person name="Holmes A."/>
            <person name="Grewal N."/>
            <person name="Mulvaney E."/>
            <person name="Ryan E."/>
            <person name="Sun H."/>
            <person name="Florea L."/>
            <person name="Miller W."/>
            <person name="Stoneking T."/>
            <person name="Nhan M."/>
            <person name="Waterston R."/>
            <person name="Wilson R.K."/>
        </authorList>
    </citation>
    <scope>NUCLEOTIDE SEQUENCE [LARGE SCALE GENOMIC DNA]</scope>
    <source>
        <strain>LT2 / SGSC1412 / ATCC 700720</strain>
    </source>
</reference>
<reference key="3">
    <citation type="journal article" date="1999" name="J. Biol. Chem.">
        <title>Molecular characterization of the PmrA regulon.</title>
        <authorList>
            <person name="Woesten M.M.S.M."/>
            <person name="Groisman E.A."/>
        </authorList>
    </citation>
    <scope>INDUCTION</scope>
    <source>
        <strain>ATCC 14028s / SGSG 2262</strain>
    </source>
</reference>
<reference key="4">
    <citation type="journal article" date="2000" name="Infect. Immun.">
        <title>Genetic and functional analysis of a PmrA-PmrB-regulated locus necessary for lipopolysaccharide modification, antimicrobial peptide resistance, and oral virulence of Salmonella enterica serovar typhimurium.</title>
        <authorList>
            <person name="Gunn J.S."/>
            <person name="Ryan S.S."/>
            <person name="Van Velkinburgh J.C."/>
            <person name="Ernst R.K."/>
            <person name="Miller S.I."/>
        </authorList>
    </citation>
    <scope>FUNCTION IN POLYMYXIN RESISTANCE</scope>
    <source>
        <strain>ATCC 14028s / SGSG 2262</strain>
    </source>
</reference>
<gene>
    <name evidence="1" type="primary">arnD</name>
    <name type="synonym">pbgP4</name>
    <name type="synonym">pmrJ</name>
    <name type="ordered locus">STM2300</name>
</gene>
<keyword id="KW-0002">3D-structure</keyword>
<keyword id="KW-0046">Antibiotic resistance</keyword>
<keyword id="KW-0378">Hydrolase</keyword>
<keyword id="KW-0441">Lipid A biosynthesis</keyword>
<keyword id="KW-0444">Lipid biosynthesis</keyword>
<keyword id="KW-0443">Lipid metabolism</keyword>
<keyword id="KW-0448">Lipopolysaccharide biosynthesis</keyword>
<keyword id="KW-1185">Reference proteome</keyword>
<name>ARND_SALTY</name>
<feature type="chain" id="PRO_0000169177" description="Probable 4-deoxy-4-formamido-L-arabinose-phosphoundecaprenol deformylase ArnD">
    <location>
        <begin position="1"/>
        <end position="299"/>
    </location>
</feature>
<feature type="domain" description="NodB homology" evidence="1">
    <location>
        <begin position="2"/>
        <end position="260"/>
    </location>
</feature>
<feature type="strand" evidence="4">
    <location>
        <begin position="2"/>
        <end position="10"/>
    </location>
</feature>
<feature type="helix" evidence="4">
    <location>
        <begin position="13"/>
        <end position="17"/>
    </location>
</feature>
<feature type="helix" evidence="4">
    <location>
        <begin position="19"/>
        <end position="29"/>
    </location>
</feature>
<feature type="strand" evidence="4">
    <location>
        <begin position="35"/>
        <end position="39"/>
    </location>
</feature>
<feature type="helix" evidence="4">
    <location>
        <begin position="45"/>
        <end position="48"/>
    </location>
</feature>
<feature type="helix" evidence="4">
    <location>
        <begin position="74"/>
        <end position="76"/>
    </location>
</feature>
<feature type="strand" evidence="4">
    <location>
        <begin position="77"/>
        <end position="81"/>
    </location>
</feature>
<feature type="turn" evidence="4">
    <location>
        <begin position="86"/>
        <end position="90"/>
    </location>
</feature>
<feature type="helix" evidence="4">
    <location>
        <begin position="91"/>
        <end position="100"/>
    </location>
</feature>
<feature type="strand" evidence="4">
    <location>
        <begin position="101"/>
        <end position="109"/>
    </location>
</feature>
<feature type="helix" evidence="4">
    <location>
        <begin position="110"/>
        <end position="116"/>
    </location>
</feature>
<feature type="helix" evidence="4">
    <location>
        <begin position="117"/>
        <end position="119"/>
    </location>
</feature>
<feature type="helix" evidence="4">
    <location>
        <begin position="122"/>
        <end position="140"/>
    </location>
</feature>
<feature type="helix" evidence="4">
    <location>
        <begin position="150"/>
        <end position="152"/>
    </location>
</feature>
<feature type="helix" evidence="4">
    <location>
        <begin position="156"/>
        <end position="163"/>
    </location>
</feature>
<feature type="strand" evidence="4">
    <location>
        <begin position="168"/>
        <end position="170"/>
    </location>
</feature>
<feature type="strand" evidence="4">
    <location>
        <begin position="179"/>
        <end position="184"/>
    </location>
</feature>
<feature type="helix" evidence="4">
    <location>
        <begin position="200"/>
        <end position="203"/>
    </location>
</feature>
<feature type="helix" evidence="4">
    <location>
        <begin position="210"/>
        <end position="222"/>
    </location>
</feature>
<feature type="strand" evidence="4">
    <location>
        <begin position="229"/>
        <end position="233"/>
    </location>
</feature>
<feature type="helix" evidence="4">
    <location>
        <begin position="236"/>
        <end position="240"/>
    </location>
</feature>
<feature type="helix" evidence="4">
    <location>
        <begin position="242"/>
        <end position="254"/>
    </location>
</feature>
<feature type="strand" evidence="4">
    <location>
        <begin position="257"/>
        <end position="260"/>
    </location>
</feature>
<feature type="helix" evidence="4">
    <location>
        <begin position="262"/>
        <end position="265"/>
    </location>
</feature>
<feature type="helix" evidence="4">
    <location>
        <begin position="270"/>
        <end position="272"/>
    </location>
</feature>
<feature type="strand" evidence="4">
    <location>
        <begin position="275"/>
        <end position="281"/>
    </location>
</feature>
<feature type="strand" evidence="4">
    <location>
        <begin position="290"/>
        <end position="294"/>
    </location>
</feature>